<accession>Q810F8</accession>
<accession>O54841</accession>
<accession>Q32MF8</accession>
<accession>Q6QH75</accession>
<gene>
    <name type="primary">Tbx10</name>
    <name type="synonym">Tbx13</name>
    <name type="synonym">Tbx7</name>
</gene>
<name>TBX10_MOUSE</name>
<reference key="1">
    <citation type="journal article" date="2003" name="Gene Expr. Patterns">
        <title>The T-box gene Tbx10 exhibits a uniquely restricted expression pattern during mouse embryogenesis.</title>
        <authorList>
            <person name="Bush J.O."/>
            <person name="Maltby K.M."/>
            <person name="Cho E.-S."/>
            <person name="Jiang R."/>
        </authorList>
    </citation>
    <scope>NUCLEOTIDE SEQUENCE [MRNA] (ISOFORM 1)</scope>
    <source>
        <strain>C57BL/6J</strain>
    </source>
</reference>
<reference key="2">
    <citation type="journal article" date="2004" name="Proc. Natl. Acad. Sci. U.S.A.">
        <title>The cleft lip and palate defects in Dancer mutant mice result from gain of function of the Tbx10 gene.</title>
        <authorList>
            <person name="Bush J.O."/>
            <person name="Lan Y."/>
            <person name="Jiang R."/>
        </authorList>
    </citation>
    <scope>NUCLEOTIDE SEQUENCE [MRNA] (ISOFORM 2)</scope>
    <scope>DISEASE</scope>
    <source>
        <strain>C3H/HeJ</strain>
    </source>
</reference>
<reference key="3">
    <citation type="journal article" date="2004" name="Genome Res.">
        <title>The status, quality, and expansion of the NIH full-length cDNA project: the Mammalian Gene Collection (MGC).</title>
        <authorList>
            <consortium name="The MGC Project Team"/>
        </authorList>
    </citation>
    <scope>NUCLEOTIDE SEQUENCE [LARGE SCALE MRNA] (ISOFORM 1)</scope>
</reference>
<reference key="4">
    <citation type="journal article" date="1998" name="Genomics">
        <title>A combined analysis of genomic and primary protein structure defines the phylogenetic relationship of new members of the T-box family.</title>
        <authorList>
            <person name="Wattler S."/>
            <person name="Russ A."/>
            <person name="Evans M."/>
            <person name="Nehls M."/>
        </authorList>
    </citation>
    <scope>NUCLEOTIDE SEQUENCE [MRNA] OF 74-251</scope>
</reference>
<protein>
    <recommendedName>
        <fullName>T-box transcription factor TBX10</fullName>
        <shortName>T-box protein 10</shortName>
    </recommendedName>
    <alternativeName>
        <fullName>MmTBX7</fullName>
    </alternativeName>
    <alternativeName>
        <fullName>T-box protein 13</fullName>
    </alternativeName>
</protein>
<keyword id="KW-0025">Alternative splicing</keyword>
<keyword id="KW-0238">DNA-binding</keyword>
<keyword id="KW-0539">Nucleus</keyword>
<keyword id="KW-1185">Reference proteome</keyword>
<keyword id="KW-0804">Transcription</keyword>
<keyword id="KW-0805">Transcription regulation</keyword>
<organism>
    <name type="scientific">Mus musculus</name>
    <name type="common">Mouse</name>
    <dbReference type="NCBI Taxonomy" id="10090"/>
    <lineage>
        <taxon>Eukaryota</taxon>
        <taxon>Metazoa</taxon>
        <taxon>Chordata</taxon>
        <taxon>Craniata</taxon>
        <taxon>Vertebrata</taxon>
        <taxon>Euteleostomi</taxon>
        <taxon>Mammalia</taxon>
        <taxon>Eutheria</taxon>
        <taxon>Euarchontoglires</taxon>
        <taxon>Glires</taxon>
        <taxon>Rodentia</taxon>
        <taxon>Myomorpha</taxon>
        <taxon>Muroidea</taxon>
        <taxon>Muridae</taxon>
        <taxon>Murinae</taxon>
        <taxon>Mus</taxon>
        <taxon>Mus</taxon>
    </lineage>
</organism>
<dbReference type="EMBL" id="AY229976">
    <property type="protein sequence ID" value="AAO73482.1"/>
    <property type="molecule type" value="mRNA"/>
</dbReference>
<dbReference type="EMBL" id="AY542280">
    <property type="protein sequence ID" value="AAS55456.1"/>
    <property type="molecule type" value="mRNA"/>
</dbReference>
<dbReference type="EMBL" id="BC109150">
    <property type="protein sequence ID" value="AAI09151.1"/>
    <property type="molecule type" value="mRNA"/>
</dbReference>
<dbReference type="EMBL" id="BC109151">
    <property type="protein sequence ID" value="AAI09152.1"/>
    <property type="molecule type" value="mRNA"/>
</dbReference>
<dbReference type="EMBL" id="AF013283">
    <property type="protein sequence ID" value="AAC40116.1"/>
    <property type="molecule type" value="mRNA"/>
</dbReference>
<dbReference type="CCDS" id="CCDS29407.1">
    <molecule id="Q810F8-1"/>
</dbReference>
<dbReference type="RefSeq" id="NP_001001320.1">
    <molecule id="Q810F8-1"/>
    <property type="nucleotide sequence ID" value="NM_001001320.1"/>
</dbReference>
<dbReference type="RefSeq" id="NP_035663.1">
    <molecule id="Q810F8-2"/>
    <property type="nucleotide sequence ID" value="NM_011533.2"/>
</dbReference>
<dbReference type="SMR" id="Q810F8"/>
<dbReference type="FunCoup" id="Q810F8">
    <property type="interactions" value="1"/>
</dbReference>
<dbReference type="STRING" id="10090.ENSMUSP00000037401"/>
<dbReference type="GlyGen" id="Q810F8">
    <property type="glycosylation" value="1 site"/>
</dbReference>
<dbReference type="iPTMnet" id="Q810F8"/>
<dbReference type="PhosphoSitePlus" id="Q810F8"/>
<dbReference type="PaxDb" id="10090-ENSMUSP00000037401"/>
<dbReference type="ProteomicsDB" id="262954">
    <molecule id="Q810F8-1"/>
</dbReference>
<dbReference type="ProteomicsDB" id="262955">
    <molecule id="Q810F8-2"/>
</dbReference>
<dbReference type="DNASU" id="109575"/>
<dbReference type="Ensembl" id="ENSMUST00000041871.9">
    <molecule id="Q810F8-1"/>
    <property type="protein sequence ID" value="ENSMUSP00000037401.8"/>
    <property type="gene ID" value="ENSMUSG00000037477.9"/>
</dbReference>
<dbReference type="GeneID" id="109575"/>
<dbReference type="KEGG" id="mmu:109575"/>
<dbReference type="UCSC" id="uc008fya.1">
    <molecule id="Q810F8-1"/>
    <property type="organism name" value="mouse"/>
</dbReference>
<dbReference type="AGR" id="MGI:1261436"/>
<dbReference type="CTD" id="347853"/>
<dbReference type="MGI" id="MGI:1261436">
    <property type="gene designation" value="Tbx10"/>
</dbReference>
<dbReference type="VEuPathDB" id="HostDB:ENSMUSG00000037477"/>
<dbReference type="eggNOG" id="KOG3586">
    <property type="taxonomic scope" value="Eukaryota"/>
</dbReference>
<dbReference type="GeneTree" id="ENSGT00940000163374"/>
<dbReference type="HOGENOM" id="CLU_014430_0_0_1"/>
<dbReference type="InParanoid" id="Q810F8"/>
<dbReference type="OMA" id="SSWEPQP"/>
<dbReference type="OrthoDB" id="7442607at2759"/>
<dbReference type="PhylomeDB" id="Q810F8"/>
<dbReference type="TreeFam" id="TF106341"/>
<dbReference type="BioGRID-ORCS" id="109575">
    <property type="hits" value="1 hit in 79 CRISPR screens"/>
</dbReference>
<dbReference type="PRO" id="PR:Q810F8"/>
<dbReference type="Proteomes" id="UP000000589">
    <property type="component" value="Chromosome 19"/>
</dbReference>
<dbReference type="RNAct" id="Q810F8">
    <property type="molecule type" value="protein"/>
</dbReference>
<dbReference type="Bgee" id="ENSMUSG00000037477">
    <property type="expression patterns" value="Expressed in rhombomere 4 and 35 other cell types or tissues"/>
</dbReference>
<dbReference type="GO" id="GO:0005634">
    <property type="term" value="C:nucleus"/>
    <property type="evidence" value="ECO:0007669"/>
    <property type="project" value="UniProtKB-SubCell"/>
</dbReference>
<dbReference type="GO" id="GO:0003700">
    <property type="term" value="F:DNA-binding transcription factor activity"/>
    <property type="evidence" value="ECO:0007669"/>
    <property type="project" value="InterPro"/>
</dbReference>
<dbReference type="GO" id="GO:0000978">
    <property type="term" value="F:RNA polymerase II cis-regulatory region sequence-specific DNA binding"/>
    <property type="evidence" value="ECO:0007669"/>
    <property type="project" value="InterPro"/>
</dbReference>
<dbReference type="GO" id="GO:0045893">
    <property type="term" value="P:positive regulation of DNA-templated transcription"/>
    <property type="evidence" value="ECO:0007669"/>
    <property type="project" value="InterPro"/>
</dbReference>
<dbReference type="CDD" id="cd20187">
    <property type="entry name" value="T-box_TBX1_10-like"/>
    <property type="match status" value="1"/>
</dbReference>
<dbReference type="FunFam" id="2.60.40.820:FF:000006">
    <property type="entry name" value="T-box transcription factor"/>
    <property type="match status" value="1"/>
</dbReference>
<dbReference type="Gene3D" id="2.60.40.820">
    <property type="entry name" value="Transcription factor, T-box"/>
    <property type="match status" value="1"/>
</dbReference>
<dbReference type="InterPro" id="IPR008967">
    <property type="entry name" value="p53-like_TF_DNA-bd_sf"/>
</dbReference>
<dbReference type="InterPro" id="IPR046360">
    <property type="entry name" value="T-box_DNA-bd"/>
</dbReference>
<dbReference type="InterPro" id="IPR036960">
    <property type="entry name" value="T-box_sf"/>
</dbReference>
<dbReference type="InterPro" id="IPR001699">
    <property type="entry name" value="TF_T-box"/>
</dbReference>
<dbReference type="InterPro" id="IPR018186">
    <property type="entry name" value="TF_T-box_CS"/>
</dbReference>
<dbReference type="PANTHER" id="PTHR11267">
    <property type="entry name" value="T-BOX PROTEIN-RELATED"/>
    <property type="match status" value="1"/>
</dbReference>
<dbReference type="PANTHER" id="PTHR11267:SF102">
    <property type="entry name" value="T-BOX TRANSCRIPTION FACTOR TBX10"/>
    <property type="match status" value="1"/>
</dbReference>
<dbReference type="Pfam" id="PF00907">
    <property type="entry name" value="T-box"/>
    <property type="match status" value="1"/>
</dbReference>
<dbReference type="PRINTS" id="PR00937">
    <property type="entry name" value="TBOX"/>
</dbReference>
<dbReference type="SMART" id="SM00425">
    <property type="entry name" value="TBOX"/>
    <property type="match status" value="1"/>
</dbReference>
<dbReference type="SUPFAM" id="SSF49417">
    <property type="entry name" value="p53-like transcription factors"/>
    <property type="match status" value="1"/>
</dbReference>
<dbReference type="PROSITE" id="PS01283">
    <property type="entry name" value="TBOX_1"/>
    <property type="match status" value="1"/>
</dbReference>
<dbReference type="PROSITE" id="PS01264">
    <property type="entry name" value="TBOX_2"/>
    <property type="match status" value="1"/>
</dbReference>
<dbReference type="PROSITE" id="PS50252">
    <property type="entry name" value="TBOX_3"/>
    <property type="match status" value="1"/>
</dbReference>
<evidence type="ECO:0000250" key="1"/>
<evidence type="ECO:0000255" key="2">
    <source>
        <dbReference type="PROSITE-ProRule" id="PRU00201"/>
    </source>
</evidence>
<evidence type="ECO:0000256" key="3">
    <source>
        <dbReference type="SAM" id="MobiDB-lite"/>
    </source>
</evidence>
<evidence type="ECO:0000269" key="4">
    <source>
    </source>
</evidence>
<evidence type="ECO:0000303" key="5">
    <source>
    </source>
</evidence>
<evidence type="ECO:0000305" key="6"/>
<comment type="function">
    <text evidence="1">Probable transcriptional regulator involved in developmental processes.</text>
</comment>
<comment type="subcellular location">
    <subcellularLocation>
        <location evidence="2">Nucleus</location>
    </subcellularLocation>
</comment>
<comment type="alternative products">
    <event type="alternative splicing"/>
    <isoform>
        <id>Q810F8-1</id>
        <name>1</name>
        <sequence type="displayed"/>
    </isoform>
    <isoform>
        <id>Q810F8-2</id>
        <name>2</name>
        <sequence type="described" ref="VSP_011305"/>
    </isoform>
</comment>
<comment type="disease">
    <text evidence="4">Defects in Tbx10 are the cause of a cleft lip and palate (CL/P) phenotype called Dancer (Dc). The defect is caused by a gain of function.</text>
</comment>
<feature type="chain" id="PRO_0000184442" description="T-box transcription factor TBX10">
    <location>
        <begin position="1"/>
        <end position="385"/>
    </location>
</feature>
<feature type="DNA-binding region" description="T-box" evidence="2">
    <location>
        <begin position="69"/>
        <end position="252"/>
    </location>
</feature>
<feature type="region of interest" description="Disordered" evidence="3">
    <location>
        <begin position="283"/>
        <end position="310"/>
    </location>
</feature>
<feature type="region of interest" description="Disordered" evidence="3">
    <location>
        <begin position="328"/>
        <end position="359"/>
    </location>
</feature>
<feature type="compositionally biased region" description="Polar residues" evidence="3">
    <location>
        <begin position="293"/>
        <end position="307"/>
    </location>
</feature>
<feature type="compositionally biased region" description="Low complexity" evidence="3">
    <location>
        <begin position="331"/>
        <end position="347"/>
    </location>
</feature>
<feature type="splice variant" id="VSP_011305" description="In isoform 2." evidence="5">
    <location>
        <begin position="1"/>
        <end position="41"/>
    </location>
</feature>
<feature type="sequence conflict" description="In Ref. 4; AAC40116." evidence="6" ref="4">
    <location>
        <position position="93"/>
    </location>
</feature>
<feature type="sequence conflict" description="In Ref. 4; AAC40116." evidence="6" ref="4">
    <original>L</original>
    <variation>F</variation>
    <location>
        <position position="186"/>
    </location>
</feature>
<proteinExistence type="evidence at transcript level"/>
<sequence length="385" mass="42407">MAVFLSAGLGVLAPPETCPHPETSTSWESRLGTRFPSGSCTMSTEAQAMAEPTGQGPKNPRVSSVMVQLEMKPLWEEFNQLGTEMIVTKAGRRMFPTFQVKILGMDTLADYALLMDFIPLDDKRYRYAFHSSAWLVAGKADPATPGRVHFHPDSPAKGAQWMRQIVSFDKLKLTNNLMDDNGHIILNSMHRYQPRFHVVFVDPRKDSARYAQENFKSFVFTETQFTAVTAYQNHRITQLKIASNPFAKGFREADPDSWPVTPRPLLSIPARSRSSLSPCLLKGSAEREKDTSKASASSSRTPTQPHNQLLPAPDVLLAPATYRPLPYQNLYPGSPSRAGPPRARLAPYPLPNISTAGDQEDPTLAAGLGLLPTSALCLVSNQASQ</sequence>